<organism>
    <name type="scientific">Helicobacter pylori (strain HPAG1)</name>
    <dbReference type="NCBI Taxonomy" id="357544"/>
    <lineage>
        <taxon>Bacteria</taxon>
        <taxon>Pseudomonadati</taxon>
        <taxon>Campylobacterota</taxon>
        <taxon>Epsilonproteobacteria</taxon>
        <taxon>Campylobacterales</taxon>
        <taxon>Helicobacteraceae</taxon>
        <taxon>Helicobacter</taxon>
    </lineage>
</organism>
<reference key="1">
    <citation type="journal article" date="2006" name="Proc. Natl. Acad. Sci. U.S.A.">
        <title>The complete genome sequence of a chronic atrophic gastritis Helicobacter pylori strain: evolution during disease progression.</title>
        <authorList>
            <person name="Oh J.D."/>
            <person name="Kling-Baeckhed H."/>
            <person name="Giannakis M."/>
            <person name="Xu J."/>
            <person name="Fulton R.S."/>
            <person name="Fulton L.A."/>
            <person name="Cordum H.S."/>
            <person name="Wang C."/>
            <person name="Elliott G."/>
            <person name="Edwards J."/>
            <person name="Mardis E.R."/>
            <person name="Engstrand L.G."/>
            <person name="Gordon J.I."/>
        </authorList>
    </citation>
    <scope>NUCLEOTIDE SEQUENCE [LARGE SCALE GENOMIC DNA]</scope>
    <source>
        <strain>HPAG1</strain>
    </source>
</reference>
<keyword id="KW-0687">Ribonucleoprotein</keyword>
<keyword id="KW-0689">Ribosomal protein</keyword>
<keyword id="KW-0694">RNA-binding</keyword>
<keyword id="KW-0699">rRNA-binding</keyword>
<evidence type="ECO:0000255" key="1">
    <source>
        <dbReference type="HAMAP-Rule" id="MF_01302"/>
    </source>
</evidence>
<evidence type="ECO:0000305" key="2"/>
<proteinExistence type="inferred from homology"/>
<protein>
    <recommendedName>
        <fullName evidence="1">Small ribosomal subunit protein uS8</fullName>
    </recommendedName>
    <alternativeName>
        <fullName evidence="2">30S ribosomal protein S8</fullName>
    </alternativeName>
</protein>
<accession>Q1CRV5</accession>
<name>RS8_HELPH</name>
<gene>
    <name evidence="1" type="primary">rpsH</name>
    <name type="ordered locus">HPAG1_1250</name>
</gene>
<dbReference type="EMBL" id="CP000241">
    <property type="protein sequence ID" value="ABF85317.1"/>
    <property type="molecule type" value="Genomic_DNA"/>
</dbReference>
<dbReference type="RefSeq" id="WP_000245805.1">
    <property type="nucleotide sequence ID" value="NC_008086.1"/>
</dbReference>
<dbReference type="SMR" id="Q1CRV5"/>
<dbReference type="GeneID" id="93237564"/>
<dbReference type="KEGG" id="hpa:HPAG1_1250"/>
<dbReference type="HOGENOM" id="CLU_098428_0_2_7"/>
<dbReference type="GO" id="GO:1990904">
    <property type="term" value="C:ribonucleoprotein complex"/>
    <property type="evidence" value="ECO:0007669"/>
    <property type="project" value="UniProtKB-KW"/>
</dbReference>
<dbReference type="GO" id="GO:0005840">
    <property type="term" value="C:ribosome"/>
    <property type="evidence" value="ECO:0007669"/>
    <property type="project" value="UniProtKB-KW"/>
</dbReference>
<dbReference type="GO" id="GO:0019843">
    <property type="term" value="F:rRNA binding"/>
    <property type="evidence" value="ECO:0007669"/>
    <property type="project" value="UniProtKB-UniRule"/>
</dbReference>
<dbReference type="GO" id="GO:0003735">
    <property type="term" value="F:structural constituent of ribosome"/>
    <property type="evidence" value="ECO:0007669"/>
    <property type="project" value="InterPro"/>
</dbReference>
<dbReference type="GO" id="GO:0006412">
    <property type="term" value="P:translation"/>
    <property type="evidence" value="ECO:0007669"/>
    <property type="project" value="UniProtKB-UniRule"/>
</dbReference>
<dbReference type="FunFam" id="3.30.1370.30:FF:000002">
    <property type="entry name" value="30S ribosomal protein S8"/>
    <property type="match status" value="1"/>
</dbReference>
<dbReference type="FunFam" id="3.30.1490.10:FF:000001">
    <property type="entry name" value="30S ribosomal protein S8"/>
    <property type="match status" value="1"/>
</dbReference>
<dbReference type="Gene3D" id="3.30.1370.30">
    <property type="match status" value="1"/>
</dbReference>
<dbReference type="Gene3D" id="3.30.1490.10">
    <property type="match status" value="1"/>
</dbReference>
<dbReference type="HAMAP" id="MF_01302_B">
    <property type="entry name" value="Ribosomal_uS8_B"/>
    <property type="match status" value="1"/>
</dbReference>
<dbReference type="InterPro" id="IPR000630">
    <property type="entry name" value="Ribosomal_uS8"/>
</dbReference>
<dbReference type="InterPro" id="IPR047863">
    <property type="entry name" value="Ribosomal_uS8_CS"/>
</dbReference>
<dbReference type="InterPro" id="IPR035987">
    <property type="entry name" value="Ribosomal_uS8_sf"/>
</dbReference>
<dbReference type="NCBIfam" id="NF001109">
    <property type="entry name" value="PRK00136.1"/>
    <property type="match status" value="1"/>
</dbReference>
<dbReference type="PANTHER" id="PTHR11758">
    <property type="entry name" value="40S RIBOSOMAL PROTEIN S15A"/>
    <property type="match status" value="1"/>
</dbReference>
<dbReference type="Pfam" id="PF00410">
    <property type="entry name" value="Ribosomal_S8"/>
    <property type="match status" value="1"/>
</dbReference>
<dbReference type="SUPFAM" id="SSF56047">
    <property type="entry name" value="Ribosomal protein S8"/>
    <property type="match status" value="1"/>
</dbReference>
<dbReference type="PROSITE" id="PS00053">
    <property type="entry name" value="RIBOSOMAL_S8"/>
    <property type="match status" value="1"/>
</dbReference>
<comment type="function">
    <text evidence="1">One of the primary rRNA binding proteins, it binds directly to 16S rRNA central domain where it helps coordinate assembly of the platform of the 30S subunit.</text>
</comment>
<comment type="subunit">
    <text evidence="1">Part of the 30S ribosomal subunit. Contacts proteins S5 and S12.</text>
</comment>
<comment type="similarity">
    <text evidence="1">Belongs to the universal ribosomal protein uS8 family.</text>
</comment>
<feature type="chain" id="PRO_0000290851" description="Small ribosomal subunit protein uS8">
    <location>
        <begin position="1"/>
        <end position="131"/>
    </location>
</feature>
<sequence>MVNDIIADSLTRLRNASMRRLEFTQLYYAKIVVSILEIFKEKGFIKDFNVKDKDKKQSVYVQLAYDEKGHSKISEVKRLSKPGRRVYKQKNELKRFKNGYGVIVVSTSKGVITNEEAYRQNVGGEVLCSIW</sequence>